<dbReference type="EC" id="7.1.1.9"/>
<dbReference type="EMBL" id="M80907">
    <property type="protein sequence ID" value="AAA65043.1"/>
    <property type="molecule type" value="Genomic_DNA"/>
</dbReference>
<dbReference type="SMR" id="Q37684"/>
<dbReference type="GO" id="GO:0005743">
    <property type="term" value="C:mitochondrial inner membrane"/>
    <property type="evidence" value="ECO:0007669"/>
    <property type="project" value="UniProtKB-SubCell"/>
</dbReference>
<dbReference type="GO" id="GO:0045277">
    <property type="term" value="C:respiratory chain complex IV"/>
    <property type="evidence" value="ECO:0000250"/>
    <property type="project" value="UniProtKB"/>
</dbReference>
<dbReference type="GO" id="GO:0005507">
    <property type="term" value="F:copper ion binding"/>
    <property type="evidence" value="ECO:0007669"/>
    <property type="project" value="InterPro"/>
</dbReference>
<dbReference type="GO" id="GO:0004129">
    <property type="term" value="F:cytochrome-c oxidase activity"/>
    <property type="evidence" value="ECO:0007669"/>
    <property type="project" value="UniProtKB-EC"/>
</dbReference>
<dbReference type="GO" id="GO:0042773">
    <property type="term" value="P:ATP synthesis coupled electron transport"/>
    <property type="evidence" value="ECO:0007669"/>
    <property type="project" value="TreeGrafter"/>
</dbReference>
<dbReference type="CDD" id="cd13912">
    <property type="entry name" value="CcO_II_C"/>
    <property type="match status" value="1"/>
</dbReference>
<dbReference type="FunFam" id="1.10.287.90:FF:000001">
    <property type="entry name" value="Cytochrome c oxidase subunit 2"/>
    <property type="match status" value="1"/>
</dbReference>
<dbReference type="FunFam" id="2.60.40.420:FF:000001">
    <property type="entry name" value="Cytochrome c oxidase subunit 2"/>
    <property type="match status" value="1"/>
</dbReference>
<dbReference type="Gene3D" id="1.10.287.90">
    <property type="match status" value="1"/>
</dbReference>
<dbReference type="Gene3D" id="2.60.40.420">
    <property type="entry name" value="Cupredoxins - blue copper proteins"/>
    <property type="match status" value="1"/>
</dbReference>
<dbReference type="InterPro" id="IPR045187">
    <property type="entry name" value="CcO_II"/>
</dbReference>
<dbReference type="InterPro" id="IPR002429">
    <property type="entry name" value="CcO_II-like_C"/>
</dbReference>
<dbReference type="InterPro" id="IPR034210">
    <property type="entry name" value="CcO_II_C"/>
</dbReference>
<dbReference type="InterPro" id="IPR001505">
    <property type="entry name" value="Copper_CuA"/>
</dbReference>
<dbReference type="InterPro" id="IPR008972">
    <property type="entry name" value="Cupredoxin"/>
</dbReference>
<dbReference type="InterPro" id="IPR014222">
    <property type="entry name" value="Cyt_c_oxidase_su2"/>
</dbReference>
<dbReference type="InterPro" id="IPR011759">
    <property type="entry name" value="Cyt_c_oxidase_su2_TM_dom"/>
</dbReference>
<dbReference type="InterPro" id="IPR036257">
    <property type="entry name" value="Cyt_c_oxidase_su2_TM_sf"/>
</dbReference>
<dbReference type="NCBIfam" id="TIGR02866">
    <property type="entry name" value="CoxB"/>
    <property type="match status" value="1"/>
</dbReference>
<dbReference type="PANTHER" id="PTHR22888:SF9">
    <property type="entry name" value="CYTOCHROME C OXIDASE SUBUNIT 2"/>
    <property type="match status" value="1"/>
</dbReference>
<dbReference type="PANTHER" id="PTHR22888">
    <property type="entry name" value="CYTOCHROME C OXIDASE, SUBUNIT II"/>
    <property type="match status" value="1"/>
</dbReference>
<dbReference type="Pfam" id="PF00116">
    <property type="entry name" value="COX2"/>
    <property type="match status" value="1"/>
</dbReference>
<dbReference type="Pfam" id="PF02790">
    <property type="entry name" value="COX2_TM"/>
    <property type="match status" value="1"/>
</dbReference>
<dbReference type="PRINTS" id="PR01166">
    <property type="entry name" value="CYCOXIDASEII"/>
</dbReference>
<dbReference type="SUPFAM" id="SSF49503">
    <property type="entry name" value="Cupredoxins"/>
    <property type="match status" value="1"/>
</dbReference>
<dbReference type="SUPFAM" id="SSF81464">
    <property type="entry name" value="Cytochrome c oxidase subunit II-like, transmembrane region"/>
    <property type="match status" value="1"/>
</dbReference>
<dbReference type="PROSITE" id="PS00078">
    <property type="entry name" value="COX2"/>
    <property type="match status" value="1"/>
</dbReference>
<dbReference type="PROSITE" id="PS50857">
    <property type="entry name" value="COX2_CUA"/>
    <property type="match status" value="1"/>
</dbReference>
<dbReference type="PROSITE" id="PS50999">
    <property type="entry name" value="COX2_TM"/>
    <property type="match status" value="1"/>
</dbReference>
<geneLocation type="mitochondrion"/>
<evidence type="ECO:0000250" key="1">
    <source>
        <dbReference type="UniProtKB" id="P00403"/>
    </source>
</evidence>
<evidence type="ECO:0000250" key="2">
    <source>
        <dbReference type="UniProtKB" id="P00410"/>
    </source>
</evidence>
<evidence type="ECO:0000250" key="3">
    <source>
        <dbReference type="UniProtKB" id="P68530"/>
    </source>
</evidence>
<evidence type="ECO:0000305" key="4"/>
<accession>Q37684</accession>
<organism>
    <name type="scientific">Tupaia glis</name>
    <name type="common">Common tree shrew</name>
    <name type="synonym">Sorex glis</name>
    <dbReference type="NCBI Taxonomy" id="9395"/>
    <lineage>
        <taxon>Eukaryota</taxon>
        <taxon>Metazoa</taxon>
        <taxon>Chordata</taxon>
        <taxon>Craniata</taxon>
        <taxon>Vertebrata</taxon>
        <taxon>Euteleostomi</taxon>
        <taxon>Mammalia</taxon>
        <taxon>Eutheria</taxon>
        <taxon>Euarchontoglires</taxon>
        <taxon>Scandentia</taxon>
        <taxon>Tupaiidae</taxon>
        <taxon>Tupaia</taxon>
    </lineage>
</organism>
<protein>
    <recommendedName>
        <fullName>Cytochrome c oxidase subunit 2</fullName>
        <ecNumber>7.1.1.9</ecNumber>
    </recommendedName>
    <alternativeName>
        <fullName>Cytochrome c oxidase polypeptide II</fullName>
    </alternativeName>
</protein>
<sequence>MAYPLQLGFQDASSPIMEELLHFHDHTLMIVFLISSLVLYIISLMLTTKLTHTSTMDAQEVETIWTILPAIILILIALPSLRILYMMDEINNPSLTVKTMGHQWYWSYEYTDYEELTFDSYMIPTLDLKPGDVRLLEVDNRVVLPMEIPVRMLISSEDVLHSWAVPSLGLKTDAIPGRLNQATLISTRPGLFYGQCSEICGSNHSFMPIVLELVPLKHFENWTTTML</sequence>
<name>COX2_TUPGL</name>
<feature type="chain" id="PRO_0000183709" description="Cytochrome c oxidase subunit 2">
    <location>
        <begin position="1"/>
        <end position="227"/>
    </location>
</feature>
<feature type="topological domain" description="Mitochondrial intermembrane" evidence="3">
    <location>
        <begin position="1"/>
        <end position="14"/>
    </location>
</feature>
<feature type="transmembrane region" description="Helical; Name=I" evidence="3">
    <location>
        <begin position="15"/>
        <end position="45"/>
    </location>
</feature>
<feature type="topological domain" description="Mitochondrial matrix" evidence="3">
    <location>
        <begin position="46"/>
        <end position="59"/>
    </location>
</feature>
<feature type="transmembrane region" description="Helical; Name=II" evidence="3">
    <location>
        <begin position="60"/>
        <end position="87"/>
    </location>
</feature>
<feature type="topological domain" description="Mitochondrial intermembrane" evidence="3">
    <location>
        <begin position="88"/>
        <end position="227"/>
    </location>
</feature>
<feature type="binding site" evidence="3">
    <location>
        <position position="161"/>
    </location>
    <ligand>
        <name>Cu cation</name>
        <dbReference type="ChEBI" id="CHEBI:23378"/>
        <label>A1</label>
    </ligand>
</feature>
<feature type="binding site" evidence="3">
    <location>
        <position position="196"/>
    </location>
    <ligand>
        <name>Cu cation</name>
        <dbReference type="ChEBI" id="CHEBI:23378"/>
        <label>A1</label>
    </ligand>
</feature>
<feature type="binding site" evidence="3">
    <location>
        <position position="196"/>
    </location>
    <ligand>
        <name>Cu cation</name>
        <dbReference type="ChEBI" id="CHEBI:23378"/>
        <label>A2</label>
    </ligand>
</feature>
<feature type="binding site" evidence="3">
    <location>
        <position position="198"/>
    </location>
    <ligand>
        <name>Cu cation</name>
        <dbReference type="ChEBI" id="CHEBI:23378"/>
        <label>A2</label>
    </ligand>
</feature>
<feature type="binding site" evidence="3">
    <location>
        <position position="198"/>
    </location>
    <ligand>
        <name>Mg(2+)</name>
        <dbReference type="ChEBI" id="CHEBI:18420"/>
        <note>ligand shared with MT-CO1</note>
    </ligand>
</feature>
<feature type="binding site" evidence="3">
    <location>
        <position position="200"/>
    </location>
    <ligand>
        <name>Cu cation</name>
        <dbReference type="ChEBI" id="CHEBI:23378"/>
        <label>A1</label>
    </ligand>
</feature>
<feature type="binding site" evidence="3">
    <location>
        <position position="200"/>
    </location>
    <ligand>
        <name>Cu cation</name>
        <dbReference type="ChEBI" id="CHEBI:23378"/>
        <label>A2</label>
    </ligand>
</feature>
<feature type="binding site" evidence="3">
    <location>
        <position position="204"/>
    </location>
    <ligand>
        <name>Cu cation</name>
        <dbReference type="ChEBI" id="CHEBI:23378"/>
        <label>A2</label>
    </ligand>
</feature>
<feature type="binding site" evidence="3">
    <location>
        <position position="207"/>
    </location>
    <ligand>
        <name>Cu cation</name>
        <dbReference type="ChEBI" id="CHEBI:23378"/>
        <label>A1</label>
    </ligand>
</feature>
<keyword id="KW-0186">Copper</keyword>
<keyword id="KW-0249">Electron transport</keyword>
<keyword id="KW-0460">Magnesium</keyword>
<keyword id="KW-0472">Membrane</keyword>
<keyword id="KW-0479">Metal-binding</keyword>
<keyword id="KW-0496">Mitochondrion</keyword>
<keyword id="KW-0999">Mitochondrion inner membrane</keyword>
<keyword id="KW-0679">Respiratory chain</keyword>
<keyword id="KW-1278">Translocase</keyword>
<keyword id="KW-0812">Transmembrane</keyword>
<keyword id="KW-1133">Transmembrane helix</keyword>
<keyword id="KW-0813">Transport</keyword>
<comment type="function">
    <text evidence="2">Component of the cytochrome c oxidase, the last enzyme in the mitochondrial electron transport chain which drives oxidative phosphorylation. The respiratory chain contains 3 multisubunit complexes succinate dehydrogenase (complex II, CII), ubiquinol-cytochrome c oxidoreductase (cytochrome b-c1 complex, complex III, CIII) and cytochrome c oxidase (complex IV, CIV), that cooperate to transfer electrons derived from NADH and succinate to molecular oxygen, creating an electrochemical gradient over the inner membrane that drives transmembrane transport and the ATP synthase. Cytochrome c oxidase is the component of the respiratory chain that catalyzes the reduction of oxygen to water. Electrons originating from reduced cytochrome c in the intermembrane space (IMS) are transferred via the dinuclear copper A center (CU(A)) of subunit 2 and heme A of subunit 1 to the active site in subunit 1, a binuclear center (BNC) formed by heme A3 and copper B (CU(B)). The BNC reduces molecular oxygen to 2 water molecules using 4 electrons from cytochrome c in the IMS and 4 protons from the mitochondrial matrix.</text>
</comment>
<comment type="catalytic activity">
    <reaction evidence="2">
        <text>4 Fe(II)-[cytochrome c] + O2 + 8 H(+)(in) = 4 Fe(III)-[cytochrome c] + 2 H2O + 4 H(+)(out)</text>
        <dbReference type="Rhea" id="RHEA:11436"/>
        <dbReference type="Rhea" id="RHEA-COMP:10350"/>
        <dbReference type="Rhea" id="RHEA-COMP:14399"/>
        <dbReference type="ChEBI" id="CHEBI:15377"/>
        <dbReference type="ChEBI" id="CHEBI:15378"/>
        <dbReference type="ChEBI" id="CHEBI:15379"/>
        <dbReference type="ChEBI" id="CHEBI:29033"/>
        <dbReference type="ChEBI" id="CHEBI:29034"/>
        <dbReference type="EC" id="7.1.1.9"/>
    </reaction>
    <physiologicalReaction direction="left-to-right" evidence="2">
        <dbReference type="Rhea" id="RHEA:11437"/>
    </physiologicalReaction>
</comment>
<comment type="cofactor">
    <cofactor evidence="3">
        <name>Cu cation</name>
        <dbReference type="ChEBI" id="CHEBI:23378"/>
    </cofactor>
    <text evidence="3">Binds a dinuclear copper A center per subunit.</text>
</comment>
<comment type="subunit">
    <text evidence="1 3">Component of the cytochrome c oxidase (complex IV, CIV), a multisubunit enzyme composed of 14 subunits. The complex is composed of a catalytic core of 3 subunits MT-CO1, MT-CO2 and MT-CO3, encoded in the mitochondrial DNA, and 11 supernumerary subunits COX4I, COX5A, COX5B, COX6A, COX6B, COX6C, COX7A, COX7B, COX7C, COX8 and NDUFA4, which are encoded in the nuclear genome. The complex exists as a monomer or a dimer and forms supercomplexes (SCs) in the inner mitochondrial membrane with NADH-ubiquinone oxidoreductase (complex I, CI) and ubiquinol-cytochrome c oxidoreductase (cytochrome b-c1 complex, complex III, CIII), resulting in different assemblies (supercomplex SCI(1)III(2)IV(1) and megacomplex MCI(2)III(2)IV(2)) (By similarity). Found in a complex with TMEM177, COA6, COX18, COX20, SCO1 and SCO2. Interacts with TMEM177 in a COX20-dependent manner. Interacts with COX20. Interacts with COX16 (By similarity).</text>
</comment>
<comment type="subcellular location">
    <subcellularLocation>
        <location evidence="3">Mitochondrion inner membrane</location>
        <topology evidence="3">Multi-pass membrane protein</topology>
    </subcellularLocation>
</comment>
<comment type="similarity">
    <text evidence="4">Belongs to the cytochrome c oxidase subunit 2 family.</text>
</comment>
<gene>
    <name type="primary">MT-CO2</name>
    <name type="synonym">COII</name>
    <name type="synonym">COXII</name>
    <name type="synonym">MTCO2</name>
</gene>
<reference key="1">
    <citation type="journal article" date="1991" name="Proc. Natl. Acad. Sci. U.S.A.">
        <title>Molecular phylogeny of the superorder Archonta.</title>
        <authorList>
            <person name="Adkins R.M."/>
            <person name="Honeycutt R.L."/>
        </authorList>
    </citation>
    <scope>NUCLEOTIDE SEQUENCE [GENOMIC DNA]</scope>
</reference>
<proteinExistence type="inferred from homology"/>